<comment type="function">
    <text evidence="2">Proton pump that utilizes the energy of pyrophosphate hydrolysis as the driving force for proton movement across the membrane. Generates a proton motive force.</text>
</comment>
<comment type="catalytic activity">
    <reaction evidence="2">
        <text>diphosphate + H2O + H(+)(in) = 2 phosphate + 2 H(+)(out)</text>
        <dbReference type="Rhea" id="RHEA:13973"/>
        <dbReference type="ChEBI" id="CHEBI:15377"/>
        <dbReference type="ChEBI" id="CHEBI:15378"/>
        <dbReference type="ChEBI" id="CHEBI:33019"/>
        <dbReference type="ChEBI" id="CHEBI:43474"/>
        <dbReference type="EC" id="7.1.3.1"/>
    </reaction>
</comment>
<comment type="cofactor">
    <cofactor evidence="2">
        <name>Mg(2+)</name>
        <dbReference type="ChEBI" id="CHEBI:18420"/>
    </cofactor>
</comment>
<comment type="subunit">
    <text evidence="2">Homodimer.</text>
</comment>
<comment type="subcellular location">
    <subcellularLocation>
        <location evidence="2">Cell inner membrane</location>
        <topology evidence="2">Multi-pass membrane protein</topology>
    </subcellularLocation>
</comment>
<comment type="similarity">
    <text evidence="2">Belongs to the H(+)-translocating pyrophosphatase (TC 3.A.10) family. K(+)-insensitive subfamily.</text>
</comment>
<evidence type="ECO:0000250" key="1"/>
<evidence type="ECO:0000255" key="2">
    <source>
        <dbReference type="HAMAP-Rule" id="MF_01129"/>
    </source>
</evidence>
<accession>Q89K83</accession>
<sequence length="706" mass="72442">MTALWLIVLCGVLSVVYAIWATSSVLSADAGSPRMQEIAAAVREGAQAYLRRQYTTIGIVGIVIFVLLVYFLGFYVAIGFAIGAILSGAAGFIGMNVSVRANVRTAQAATTSLAGGLELAFKAGAITGMLVAGLALLGVTLYFGFLVYSLKLAPDSRVVVDAMVALGFGASLISIFARLGGGIFTKGADVGGDLVGKVEAGIPEDDPRNPATIADNVGDNVGDCAGMAADLFETYAVTAVATMVLAAIFFAKTPILMSMMTLPLAIGGICIITSIIGTFFVKLGPSQSIMGALYKGLIATGVLSLIGIAVVIYTLIGFGKLDGVDYTGMSLFECGVVGLIVTALIIWITEYYTGTDYRPVKSIAAASVTGHGTNVIQGLAISMEATALPAIVIIAGILVTYSLAGLFGIAIATATMLALAGMIVALDAFGPVTDNAGGIAEMAGLPKEVRKSTDALDAVGNTTKAVTKGYAIGSAGLGALVLFAAYNQDLKFFVADSAHHTYFAGVNPDFSLNNPYVVVGLLFGGLLPYLFGAMGMTAVGRAASAIVEEVRRQFREKPGIMQGTDKPDYGKAVDLLTKAAIKEMIIPSLLPVLSPIVVYFLIYAIAGGGATGKSAAFSAVGAMLLGVIVTGLFVAISMTSGGGAWDNAKKYIEDGHYGGKGSDAHKSAVTGDTVGDPYKDTAGPAVNPMIKITNIVALLLLAILAH</sequence>
<feature type="chain" id="PRO_0000217010" description="K(+)-insensitive pyrophosphate-energized proton pump">
    <location>
        <begin position="1"/>
        <end position="706"/>
    </location>
</feature>
<feature type="transmembrane region" description="Helical" evidence="2">
    <location>
        <begin position="1"/>
        <end position="21"/>
    </location>
</feature>
<feature type="transmembrane region" description="Helical" evidence="2">
    <location>
        <begin position="62"/>
        <end position="82"/>
    </location>
</feature>
<feature type="transmembrane region" description="Helical" evidence="2">
    <location>
        <begin position="83"/>
        <end position="103"/>
    </location>
</feature>
<feature type="transmembrane region" description="Helical" evidence="2">
    <location>
        <begin position="128"/>
        <end position="148"/>
    </location>
</feature>
<feature type="transmembrane region" description="Helical" evidence="2">
    <location>
        <begin position="164"/>
        <end position="184"/>
    </location>
</feature>
<feature type="transmembrane region" description="Helical" evidence="2">
    <location>
        <begin position="231"/>
        <end position="251"/>
    </location>
</feature>
<feature type="transmembrane region" description="Helical" evidence="2">
    <location>
        <begin position="261"/>
        <end position="281"/>
    </location>
</feature>
<feature type="transmembrane region" description="Helical" evidence="2">
    <location>
        <begin position="298"/>
        <end position="318"/>
    </location>
</feature>
<feature type="transmembrane region" description="Helical" evidence="2">
    <location>
        <begin position="328"/>
        <end position="348"/>
    </location>
</feature>
<feature type="transmembrane region" description="Helical" evidence="2">
    <location>
        <begin position="376"/>
        <end position="398"/>
    </location>
</feature>
<feature type="transmembrane region" description="Helical" evidence="2">
    <location>
        <begin position="412"/>
        <end position="432"/>
    </location>
</feature>
<feature type="transmembrane region" description="Helical" evidence="2">
    <location>
        <begin position="465"/>
        <end position="485"/>
    </location>
</feature>
<feature type="transmembrane region" description="Helical" evidence="2">
    <location>
        <begin position="516"/>
        <end position="536"/>
    </location>
</feature>
<feature type="transmembrane region" description="Helical" evidence="2">
    <location>
        <begin position="585"/>
        <end position="605"/>
    </location>
</feature>
<feature type="transmembrane region" description="Helical" evidence="2">
    <location>
        <begin position="616"/>
        <end position="636"/>
    </location>
</feature>
<feature type="transmembrane region" description="Helical" evidence="2">
    <location>
        <begin position="685"/>
        <end position="705"/>
    </location>
</feature>
<feature type="binding site" evidence="1">
    <location>
        <position position="186"/>
    </location>
    <ligand>
        <name>substrate</name>
    </ligand>
</feature>
<feature type="binding site" evidence="1">
    <location>
        <position position="189"/>
    </location>
    <ligand>
        <name>Mg(2+)</name>
        <dbReference type="ChEBI" id="CHEBI:18420"/>
        <label>1</label>
    </ligand>
</feature>
<feature type="binding site" evidence="1">
    <location>
        <position position="193"/>
    </location>
    <ligand>
        <name>Mg(2+)</name>
        <dbReference type="ChEBI" id="CHEBI:18420"/>
        <label>1</label>
    </ligand>
</feature>
<feature type="binding site" evidence="1">
    <location>
        <position position="216"/>
    </location>
    <ligand>
        <name>Mg(2+)</name>
        <dbReference type="ChEBI" id="CHEBI:18420"/>
        <label>2</label>
    </ligand>
</feature>
<feature type="binding site" evidence="1">
    <location>
        <position position="219"/>
    </location>
    <ligand>
        <name>Mg(2+)</name>
        <dbReference type="ChEBI" id="CHEBI:18420"/>
        <label>2</label>
    </ligand>
</feature>
<feature type="binding site" evidence="1">
    <location>
        <position position="434"/>
    </location>
    <ligand>
        <name>Mg(2+)</name>
        <dbReference type="ChEBI" id="CHEBI:18420"/>
        <label>2</label>
    </ligand>
</feature>
<feature type="binding site" evidence="1">
    <location>
        <position position="646"/>
    </location>
    <ligand>
        <name>Ca(2+)</name>
        <dbReference type="ChEBI" id="CHEBI:29108"/>
    </ligand>
</feature>
<feature type="binding site" evidence="1">
    <location>
        <position position="672"/>
    </location>
    <ligand>
        <name>Ca(2+)</name>
        <dbReference type="ChEBI" id="CHEBI:29108"/>
    </ligand>
</feature>
<feature type="binding site" evidence="1">
    <location>
        <position position="676"/>
    </location>
    <ligand>
        <name>Ca(2+)</name>
        <dbReference type="ChEBI" id="CHEBI:29108"/>
    </ligand>
</feature>
<feature type="binding site" evidence="1">
    <location>
        <position position="679"/>
    </location>
    <ligand>
        <name>substrate</name>
    </ligand>
</feature>
<feature type="site" description="Important for ion transport" evidence="1">
    <location>
        <position position="178"/>
    </location>
</feature>
<feature type="site" description="Important for ion transport" evidence="1">
    <location>
        <position position="223"/>
    </location>
</feature>
<feature type="site" description="Important for ion transport" evidence="1">
    <location>
        <position position="230"/>
    </location>
</feature>
<feature type="site" description="Determinant of potassium independence" evidence="2">
    <location>
        <position position="464"/>
    </location>
</feature>
<feature type="site" description="Important for ion transport" evidence="1">
    <location>
        <position position="680"/>
    </location>
</feature>
<feature type="site" description="Important for ion transport" evidence="1">
    <location>
        <position position="691"/>
    </location>
</feature>
<keyword id="KW-0106">Calcium</keyword>
<keyword id="KW-0997">Cell inner membrane</keyword>
<keyword id="KW-1003">Cell membrane</keyword>
<keyword id="KW-0375">Hydrogen ion transport</keyword>
<keyword id="KW-0406">Ion transport</keyword>
<keyword id="KW-0460">Magnesium</keyword>
<keyword id="KW-0472">Membrane</keyword>
<keyword id="KW-0479">Metal-binding</keyword>
<keyword id="KW-1185">Reference proteome</keyword>
<keyword id="KW-1278">Translocase</keyword>
<keyword id="KW-0812">Transmembrane</keyword>
<keyword id="KW-1133">Transmembrane helix</keyword>
<keyword id="KW-0813">Transport</keyword>
<gene>
    <name evidence="2" type="primary">hppA</name>
    <name type="ordered locus">bll5026</name>
</gene>
<name>HPPA_BRADU</name>
<protein>
    <recommendedName>
        <fullName evidence="2">K(+)-insensitive pyrophosphate-energized proton pump</fullName>
        <ecNumber evidence="2">7.1.3.1</ecNumber>
    </recommendedName>
    <alternativeName>
        <fullName evidence="2">Membrane-bound proton-translocating pyrophosphatase</fullName>
    </alternativeName>
    <alternativeName>
        <fullName evidence="2">Pyrophosphate-energized inorganic pyrophosphatase</fullName>
        <shortName evidence="2">H(+)-PPase</shortName>
    </alternativeName>
</protein>
<proteinExistence type="inferred from homology"/>
<dbReference type="EC" id="7.1.3.1" evidence="2"/>
<dbReference type="EMBL" id="BA000040">
    <property type="protein sequence ID" value="BAC50291.1"/>
    <property type="molecule type" value="Genomic_DNA"/>
</dbReference>
<dbReference type="RefSeq" id="NP_771666.1">
    <property type="nucleotide sequence ID" value="NC_004463.1"/>
</dbReference>
<dbReference type="RefSeq" id="WP_011087787.1">
    <property type="nucleotide sequence ID" value="NC_004463.1"/>
</dbReference>
<dbReference type="SMR" id="Q89K83"/>
<dbReference type="STRING" id="224911.AAV28_22490"/>
<dbReference type="EnsemblBacteria" id="BAC50291">
    <property type="protein sequence ID" value="BAC50291"/>
    <property type="gene ID" value="BAC50291"/>
</dbReference>
<dbReference type="GeneID" id="46492031"/>
<dbReference type="KEGG" id="bja:bll5026"/>
<dbReference type="PATRIC" id="fig|224911.44.peg.4889"/>
<dbReference type="eggNOG" id="COG3808">
    <property type="taxonomic scope" value="Bacteria"/>
</dbReference>
<dbReference type="HOGENOM" id="CLU_008743_3_1_5"/>
<dbReference type="InParanoid" id="Q89K83"/>
<dbReference type="OrthoDB" id="9808652at2"/>
<dbReference type="PhylomeDB" id="Q89K83"/>
<dbReference type="Proteomes" id="UP000002526">
    <property type="component" value="Chromosome"/>
</dbReference>
<dbReference type="GO" id="GO:0005886">
    <property type="term" value="C:plasma membrane"/>
    <property type="evidence" value="ECO:0007669"/>
    <property type="project" value="UniProtKB-SubCell"/>
</dbReference>
<dbReference type="GO" id="GO:0009678">
    <property type="term" value="F:diphosphate hydrolysis-driven proton transmembrane transporter activity"/>
    <property type="evidence" value="ECO:0007669"/>
    <property type="project" value="UniProtKB-UniRule"/>
</dbReference>
<dbReference type="GO" id="GO:0004427">
    <property type="term" value="F:inorganic diphosphate phosphatase activity"/>
    <property type="evidence" value="ECO:0007669"/>
    <property type="project" value="UniProtKB-UniRule"/>
</dbReference>
<dbReference type="GO" id="GO:0000287">
    <property type="term" value="F:magnesium ion binding"/>
    <property type="evidence" value="ECO:0007669"/>
    <property type="project" value="UniProtKB-UniRule"/>
</dbReference>
<dbReference type="HAMAP" id="MF_01129">
    <property type="entry name" value="PPase_energized_pump"/>
    <property type="match status" value="1"/>
</dbReference>
<dbReference type="InterPro" id="IPR004131">
    <property type="entry name" value="PPase-energised_H-pump"/>
</dbReference>
<dbReference type="NCBIfam" id="NF001951">
    <property type="entry name" value="PRK00733.1-2"/>
    <property type="match status" value="1"/>
</dbReference>
<dbReference type="NCBIfam" id="NF001960">
    <property type="entry name" value="PRK00733.3-5"/>
    <property type="match status" value="1"/>
</dbReference>
<dbReference type="NCBIfam" id="TIGR01104">
    <property type="entry name" value="V_PPase"/>
    <property type="match status" value="1"/>
</dbReference>
<dbReference type="PANTHER" id="PTHR31998">
    <property type="entry name" value="K(+)-INSENSITIVE PYROPHOSPHATE-ENERGIZED PROTON PUMP"/>
    <property type="match status" value="1"/>
</dbReference>
<dbReference type="Pfam" id="PF03030">
    <property type="entry name" value="H_PPase"/>
    <property type="match status" value="1"/>
</dbReference>
<dbReference type="PIRSF" id="PIRSF001265">
    <property type="entry name" value="H+-PPase"/>
    <property type="match status" value="1"/>
</dbReference>
<reference key="1">
    <citation type="journal article" date="2002" name="DNA Res.">
        <title>Complete genomic sequence of nitrogen-fixing symbiotic bacterium Bradyrhizobium japonicum USDA110.</title>
        <authorList>
            <person name="Kaneko T."/>
            <person name="Nakamura Y."/>
            <person name="Sato S."/>
            <person name="Minamisawa K."/>
            <person name="Uchiumi T."/>
            <person name="Sasamoto S."/>
            <person name="Watanabe A."/>
            <person name="Idesawa K."/>
            <person name="Iriguchi M."/>
            <person name="Kawashima K."/>
            <person name="Kohara M."/>
            <person name="Matsumoto M."/>
            <person name="Shimpo S."/>
            <person name="Tsuruoka H."/>
            <person name="Wada T."/>
            <person name="Yamada M."/>
            <person name="Tabata S."/>
        </authorList>
    </citation>
    <scope>NUCLEOTIDE SEQUENCE [LARGE SCALE GENOMIC DNA]</scope>
    <source>
        <strain>JCM 10833 / BCRC 13528 / IAM 13628 / NBRC 14792 / USDA 110</strain>
    </source>
</reference>
<organism>
    <name type="scientific">Bradyrhizobium diazoefficiens (strain JCM 10833 / BCRC 13528 / IAM 13628 / NBRC 14792 / USDA 110)</name>
    <dbReference type="NCBI Taxonomy" id="224911"/>
    <lineage>
        <taxon>Bacteria</taxon>
        <taxon>Pseudomonadati</taxon>
        <taxon>Pseudomonadota</taxon>
        <taxon>Alphaproteobacteria</taxon>
        <taxon>Hyphomicrobiales</taxon>
        <taxon>Nitrobacteraceae</taxon>
        <taxon>Bradyrhizobium</taxon>
    </lineage>
</organism>